<evidence type="ECO:0000255" key="1">
    <source>
        <dbReference type="HAMAP-Rule" id="MF_00722"/>
    </source>
</evidence>
<gene>
    <name evidence="1" type="primary">nucS</name>
    <name type="ordered locus">Mflv_2337</name>
</gene>
<organism>
    <name type="scientific">Mycolicibacterium gilvum (strain PYR-GCK)</name>
    <name type="common">Mycobacterium gilvum (strain PYR-GCK)</name>
    <dbReference type="NCBI Taxonomy" id="350054"/>
    <lineage>
        <taxon>Bacteria</taxon>
        <taxon>Bacillati</taxon>
        <taxon>Actinomycetota</taxon>
        <taxon>Actinomycetes</taxon>
        <taxon>Mycobacteriales</taxon>
        <taxon>Mycobacteriaceae</taxon>
        <taxon>Mycolicibacterium</taxon>
    </lineage>
</organism>
<sequence length="223" mass="24887">MRLVIAQCTVDYVGRLTAHLPSARRLLLFKADGSVSVHADDRAYKPLNWMSPPCRLVEQADGETPVWVVENKAGEQLRITVEAIEHDSSHELGVDPGLVKDGVEAHLQALLAEHVELLGAGYTLVRREYMTPIGPVDLLCRDEQGRSVAVEIKRRGEIDGVEQLTRYLELLNRDSLLAPVAGVFAAQQIKPQARTLATDRGIRCLTLDYDKMRGMDSDEFRLF</sequence>
<reference key="1">
    <citation type="submission" date="2007-04" db="EMBL/GenBank/DDBJ databases">
        <title>Complete sequence of chromosome of Mycobacterium gilvum PYR-GCK.</title>
        <authorList>
            <consortium name="US DOE Joint Genome Institute"/>
            <person name="Copeland A."/>
            <person name="Lucas S."/>
            <person name="Lapidus A."/>
            <person name="Barry K."/>
            <person name="Detter J.C."/>
            <person name="Glavina del Rio T."/>
            <person name="Hammon N."/>
            <person name="Israni S."/>
            <person name="Dalin E."/>
            <person name="Tice H."/>
            <person name="Pitluck S."/>
            <person name="Chain P."/>
            <person name="Malfatti S."/>
            <person name="Shin M."/>
            <person name="Vergez L."/>
            <person name="Schmutz J."/>
            <person name="Larimer F."/>
            <person name="Land M."/>
            <person name="Hauser L."/>
            <person name="Kyrpides N."/>
            <person name="Mikhailova N."/>
            <person name="Miller C."/>
            <person name="Richardson P."/>
        </authorList>
    </citation>
    <scope>NUCLEOTIDE SEQUENCE [LARGE SCALE GENOMIC DNA]</scope>
    <source>
        <strain>PYR-GCK</strain>
    </source>
</reference>
<dbReference type="EC" id="3.1.-.-" evidence="1"/>
<dbReference type="EMBL" id="CP000656">
    <property type="protein sequence ID" value="ABP44815.1"/>
    <property type="molecule type" value="Genomic_DNA"/>
</dbReference>
<dbReference type="SMR" id="A4T8H8"/>
<dbReference type="STRING" id="350054.Mflv_2337"/>
<dbReference type="KEGG" id="mgi:Mflv_2337"/>
<dbReference type="eggNOG" id="COG1637">
    <property type="taxonomic scope" value="Bacteria"/>
</dbReference>
<dbReference type="HOGENOM" id="CLU_069350_0_0_11"/>
<dbReference type="OrthoDB" id="3344925at2"/>
<dbReference type="GO" id="GO:0005737">
    <property type="term" value="C:cytoplasm"/>
    <property type="evidence" value="ECO:0007669"/>
    <property type="project" value="UniProtKB-SubCell"/>
</dbReference>
<dbReference type="GO" id="GO:0003677">
    <property type="term" value="F:DNA binding"/>
    <property type="evidence" value="ECO:0007669"/>
    <property type="project" value="UniProtKB-KW"/>
</dbReference>
<dbReference type="GO" id="GO:0000014">
    <property type="term" value="F:single-stranded DNA endodeoxyribonuclease activity"/>
    <property type="evidence" value="ECO:0007669"/>
    <property type="project" value="UniProtKB-UniRule"/>
</dbReference>
<dbReference type="CDD" id="cd22341">
    <property type="entry name" value="NucS-like"/>
    <property type="match status" value="1"/>
</dbReference>
<dbReference type="Gene3D" id="2.70.180.20">
    <property type="match status" value="1"/>
</dbReference>
<dbReference type="Gene3D" id="3.40.1350.10">
    <property type="match status" value="1"/>
</dbReference>
<dbReference type="HAMAP" id="MF_00722">
    <property type="entry name" value="NucS"/>
    <property type="match status" value="1"/>
</dbReference>
<dbReference type="InterPro" id="IPR002793">
    <property type="entry name" value="Endonuclease_NucS"/>
</dbReference>
<dbReference type="InterPro" id="IPR048301">
    <property type="entry name" value="NucS_C"/>
</dbReference>
<dbReference type="InterPro" id="IPR048302">
    <property type="entry name" value="NucS_N"/>
</dbReference>
<dbReference type="InterPro" id="IPR049173">
    <property type="entry name" value="NucS_N_sf"/>
</dbReference>
<dbReference type="InterPro" id="IPR011856">
    <property type="entry name" value="tRNA_endonuc-like_dom_sf"/>
</dbReference>
<dbReference type="NCBIfam" id="NF002876">
    <property type="entry name" value="PRK03298.1"/>
    <property type="match status" value="1"/>
</dbReference>
<dbReference type="PANTHER" id="PTHR38814">
    <property type="entry name" value="ENDONUCLEASE NUCS"/>
    <property type="match status" value="1"/>
</dbReference>
<dbReference type="PANTHER" id="PTHR38814:SF1">
    <property type="entry name" value="ENDONUCLEASE NUCS"/>
    <property type="match status" value="1"/>
</dbReference>
<dbReference type="Pfam" id="PF01939">
    <property type="entry name" value="NucS_C"/>
    <property type="match status" value="1"/>
</dbReference>
<dbReference type="Pfam" id="PF21003">
    <property type="entry name" value="NucS_N"/>
    <property type="match status" value="1"/>
</dbReference>
<feature type="chain" id="PRO_1000083309" description="Endonuclease NucS">
    <location>
        <begin position="1"/>
        <end position="223"/>
    </location>
</feature>
<accession>A4T8H8</accession>
<keyword id="KW-0963">Cytoplasm</keyword>
<keyword id="KW-0238">DNA-binding</keyword>
<keyword id="KW-0255">Endonuclease</keyword>
<keyword id="KW-0378">Hydrolase</keyword>
<keyword id="KW-0540">Nuclease</keyword>
<protein>
    <recommendedName>
        <fullName evidence="1">Endonuclease NucS</fullName>
        <ecNumber evidence="1">3.1.-.-</ecNumber>
    </recommendedName>
</protein>
<comment type="function">
    <text evidence="1">Cleaves both 3' and 5' ssDNA extremities of branched DNA structures.</text>
</comment>
<comment type="subcellular location">
    <subcellularLocation>
        <location evidence="1">Cytoplasm</location>
    </subcellularLocation>
</comment>
<comment type="similarity">
    <text evidence="1">Belongs to the NucS endonuclease family.</text>
</comment>
<proteinExistence type="inferred from homology"/>
<name>NUCS_MYCGI</name>